<organism>
    <name type="scientific">Synechococcus sp. (strain PCC 6716)</name>
    <dbReference type="NCBI Taxonomy" id="32048"/>
    <lineage>
        <taxon>Bacteria</taxon>
        <taxon>Bacillati</taxon>
        <taxon>Cyanobacteriota</taxon>
        <taxon>Cyanophyceae</taxon>
        <taxon>Synechococcales</taxon>
        <taxon>Synechococcaceae</taxon>
        <taxon>Synechococcus</taxon>
    </lineage>
</organism>
<proteinExistence type="predicted"/>
<sequence>MGGRLQLWRFLVGVKLTKLLIGHGFLEAVNDAGAVAIAAIAKAGRSLRRKLRFTVSHKGSNRFWWVSIGCICYSGQRPKA</sequence>
<accession>Q05381</accession>
<dbReference type="EMBL" id="X70431">
    <property type="protein sequence ID" value="CAA49878.1"/>
    <property type="molecule type" value="Genomic_DNA"/>
</dbReference>
<reference key="1">
    <citation type="journal article" date="1993" name="Biochem. J.">
        <title>Organization and sequences of genes for the subunits of ATP synthase in the thermophilic cyanobacterium Synechococcus 6716.</title>
        <authorList>
            <person name="van Walraven H.S."/>
            <person name="Lutter R."/>
            <person name="Walker J.E."/>
        </authorList>
    </citation>
    <scope>NUCLEOTIDE SEQUENCE [GENOMIC DNA]</scope>
</reference>
<protein>
    <recommendedName>
        <fullName>Uncharacterized 8.8 kDa protein in atpI 5'region</fullName>
    </recommendedName>
    <alternativeName>
        <fullName>URF2</fullName>
    </alternativeName>
</protein>
<name>YAT2_SYNP1</name>
<feature type="chain" id="PRO_0000066131" description="Uncharacterized 8.8 kDa protein in atpI 5'region">
    <location>
        <begin position="1"/>
        <end position="80"/>
    </location>
</feature>